<accession>Q8ZBC4</accession>
<accession>Q0WBF5</accession>
<protein>
    <recommendedName>
        <fullName evidence="1">tRNA pseudouridine synthase B</fullName>
        <ecNumber evidence="1">5.4.99.25</ecNumber>
    </recommendedName>
    <alternativeName>
        <fullName evidence="1">tRNA pseudouridine(55) synthase</fullName>
        <shortName evidence="1">Psi55 synthase</shortName>
    </alternativeName>
    <alternativeName>
        <fullName evidence="1">tRNA pseudouridylate synthase</fullName>
    </alternativeName>
    <alternativeName>
        <fullName evidence="1">tRNA-uridine isomerase</fullName>
    </alternativeName>
</protein>
<sequence length="324" mass="35812">MGRPRRRGRDINGVLLLDKPLGLSSNDVLQKVKRLFSANRAGHTGALDPLATGMLPICLGEATKFSQFLLDSDKRYRVVARLGQRTDTSDAEGALISEREVNLTQAQIDTALESFRGESQQIPSMYSALKHQGKPLYEYARQGIEVEREARSITVYELLFIRWEGNDLELEIHCSKGTYIRTIIDDLGELLGCGAHVSYLRRLQVATYPSERMVTLEQLTAMVEAAQAEGRSPNPELDSLLLPMDSAVLNFPEVNLLPSVAAYVKQGQPVHVSGAPSEGMVRITEGKERNFIGIGTIAEDGRVAPKRLVVESVEVENLPVENKK</sequence>
<evidence type="ECO:0000255" key="1">
    <source>
        <dbReference type="HAMAP-Rule" id="MF_01080"/>
    </source>
</evidence>
<dbReference type="EC" id="5.4.99.25" evidence="1"/>
<dbReference type="EMBL" id="AL590842">
    <property type="protein sequence ID" value="CAL22082.1"/>
    <property type="molecule type" value="Genomic_DNA"/>
</dbReference>
<dbReference type="EMBL" id="AE009952">
    <property type="protein sequence ID" value="AAM84278.1"/>
    <property type="molecule type" value="Genomic_DNA"/>
</dbReference>
<dbReference type="EMBL" id="AE017042">
    <property type="protein sequence ID" value="AAS60859.1"/>
    <property type="molecule type" value="Genomic_DNA"/>
</dbReference>
<dbReference type="PIR" id="AG0424">
    <property type="entry name" value="AG0424"/>
</dbReference>
<dbReference type="RefSeq" id="WP_002209256.1">
    <property type="nucleotide sequence ID" value="NZ_WUCM01000036.1"/>
</dbReference>
<dbReference type="RefSeq" id="YP_002348383.1">
    <property type="nucleotide sequence ID" value="NC_003143.1"/>
</dbReference>
<dbReference type="SMR" id="Q8ZBC4"/>
<dbReference type="STRING" id="214092.YPO3494"/>
<dbReference type="PaxDb" id="214092-YPO3494"/>
<dbReference type="DNASU" id="1145637"/>
<dbReference type="EnsemblBacteria" id="AAS60859">
    <property type="protein sequence ID" value="AAS60859"/>
    <property type="gene ID" value="YP_0589"/>
</dbReference>
<dbReference type="GeneID" id="57975222"/>
<dbReference type="KEGG" id="ype:YPO3494"/>
<dbReference type="KEGG" id="ypk:y0690"/>
<dbReference type="KEGG" id="ypm:YP_0589"/>
<dbReference type="PATRIC" id="fig|214092.21.peg.3988"/>
<dbReference type="eggNOG" id="COG0130">
    <property type="taxonomic scope" value="Bacteria"/>
</dbReference>
<dbReference type="HOGENOM" id="CLU_032087_0_3_6"/>
<dbReference type="OMA" id="VDKPSGF"/>
<dbReference type="OrthoDB" id="9802309at2"/>
<dbReference type="Proteomes" id="UP000000815">
    <property type="component" value="Chromosome"/>
</dbReference>
<dbReference type="Proteomes" id="UP000001019">
    <property type="component" value="Chromosome"/>
</dbReference>
<dbReference type="Proteomes" id="UP000002490">
    <property type="component" value="Chromosome"/>
</dbReference>
<dbReference type="GO" id="GO:0009982">
    <property type="term" value="F:pseudouridine synthase activity"/>
    <property type="evidence" value="ECO:0000318"/>
    <property type="project" value="GO_Central"/>
</dbReference>
<dbReference type="GO" id="GO:0003723">
    <property type="term" value="F:RNA binding"/>
    <property type="evidence" value="ECO:0007669"/>
    <property type="project" value="InterPro"/>
</dbReference>
<dbReference type="GO" id="GO:0160148">
    <property type="term" value="F:tRNA pseudouridine(55) synthase activity"/>
    <property type="evidence" value="ECO:0007669"/>
    <property type="project" value="UniProtKB-EC"/>
</dbReference>
<dbReference type="GO" id="GO:1990481">
    <property type="term" value="P:mRNA pseudouridine synthesis"/>
    <property type="evidence" value="ECO:0000318"/>
    <property type="project" value="GO_Central"/>
</dbReference>
<dbReference type="GO" id="GO:0006400">
    <property type="term" value="P:tRNA modification"/>
    <property type="evidence" value="ECO:0000318"/>
    <property type="project" value="GO_Central"/>
</dbReference>
<dbReference type="GO" id="GO:0031119">
    <property type="term" value="P:tRNA pseudouridine synthesis"/>
    <property type="evidence" value="ECO:0007669"/>
    <property type="project" value="UniProtKB-UniRule"/>
</dbReference>
<dbReference type="CDD" id="cd02573">
    <property type="entry name" value="PseudoU_synth_EcTruB"/>
    <property type="match status" value="1"/>
</dbReference>
<dbReference type="CDD" id="cd21152">
    <property type="entry name" value="PUA_TruB_bacterial"/>
    <property type="match status" value="1"/>
</dbReference>
<dbReference type="FunFam" id="2.30.130.10:FF:000004">
    <property type="entry name" value="tRNA pseudouridine synthase B"/>
    <property type="match status" value="1"/>
</dbReference>
<dbReference type="FunFam" id="3.30.2350.10:FF:000003">
    <property type="entry name" value="tRNA pseudouridine synthase B"/>
    <property type="match status" value="1"/>
</dbReference>
<dbReference type="Gene3D" id="3.30.2350.10">
    <property type="entry name" value="Pseudouridine synthase"/>
    <property type="match status" value="1"/>
</dbReference>
<dbReference type="Gene3D" id="2.30.130.10">
    <property type="entry name" value="PUA domain"/>
    <property type="match status" value="1"/>
</dbReference>
<dbReference type="HAMAP" id="MF_01080">
    <property type="entry name" value="TruB_bact"/>
    <property type="match status" value="1"/>
</dbReference>
<dbReference type="InterPro" id="IPR020103">
    <property type="entry name" value="PsdUridine_synth_cat_dom_sf"/>
</dbReference>
<dbReference type="InterPro" id="IPR002501">
    <property type="entry name" value="PsdUridine_synth_N"/>
</dbReference>
<dbReference type="InterPro" id="IPR015947">
    <property type="entry name" value="PUA-like_sf"/>
</dbReference>
<dbReference type="InterPro" id="IPR036974">
    <property type="entry name" value="PUA_sf"/>
</dbReference>
<dbReference type="InterPro" id="IPR014780">
    <property type="entry name" value="tRNA_psdUridine_synth_TruB"/>
</dbReference>
<dbReference type="InterPro" id="IPR015240">
    <property type="entry name" value="tRNA_sdUridine_synth_fam1_C"/>
</dbReference>
<dbReference type="InterPro" id="IPR032819">
    <property type="entry name" value="TruB_C"/>
</dbReference>
<dbReference type="NCBIfam" id="TIGR00431">
    <property type="entry name" value="TruB"/>
    <property type="match status" value="1"/>
</dbReference>
<dbReference type="PANTHER" id="PTHR13767:SF2">
    <property type="entry name" value="PSEUDOURIDYLATE SYNTHASE TRUB1"/>
    <property type="match status" value="1"/>
</dbReference>
<dbReference type="PANTHER" id="PTHR13767">
    <property type="entry name" value="TRNA-PSEUDOURIDINE SYNTHASE"/>
    <property type="match status" value="1"/>
</dbReference>
<dbReference type="Pfam" id="PF09157">
    <property type="entry name" value="TruB-C_2"/>
    <property type="match status" value="1"/>
</dbReference>
<dbReference type="Pfam" id="PF16198">
    <property type="entry name" value="TruB_C_2"/>
    <property type="match status" value="1"/>
</dbReference>
<dbReference type="Pfam" id="PF01509">
    <property type="entry name" value="TruB_N"/>
    <property type="match status" value="1"/>
</dbReference>
<dbReference type="SUPFAM" id="SSF55120">
    <property type="entry name" value="Pseudouridine synthase"/>
    <property type="match status" value="1"/>
</dbReference>
<dbReference type="SUPFAM" id="SSF88697">
    <property type="entry name" value="PUA domain-like"/>
    <property type="match status" value="1"/>
</dbReference>
<organism>
    <name type="scientific">Yersinia pestis</name>
    <dbReference type="NCBI Taxonomy" id="632"/>
    <lineage>
        <taxon>Bacteria</taxon>
        <taxon>Pseudomonadati</taxon>
        <taxon>Pseudomonadota</taxon>
        <taxon>Gammaproteobacteria</taxon>
        <taxon>Enterobacterales</taxon>
        <taxon>Yersiniaceae</taxon>
        <taxon>Yersinia</taxon>
    </lineage>
</organism>
<feature type="chain" id="PRO_0000121951" description="tRNA pseudouridine synthase B">
    <location>
        <begin position="1"/>
        <end position="324"/>
    </location>
</feature>
<feature type="active site" description="Nucleophile" evidence="1">
    <location>
        <position position="48"/>
    </location>
</feature>
<feature type="binding site" evidence="1">
    <location>
        <position position="43"/>
    </location>
    <ligand>
        <name>substrate</name>
    </ligand>
</feature>
<feature type="binding site" evidence="1">
    <location>
        <position position="76"/>
    </location>
    <ligand>
        <name>substrate</name>
    </ligand>
</feature>
<feature type="binding site" evidence="1">
    <location>
        <position position="179"/>
    </location>
    <ligand>
        <name>substrate</name>
    </ligand>
</feature>
<feature type="binding site" evidence="1">
    <location>
        <position position="200"/>
    </location>
    <ligand>
        <name>substrate</name>
    </ligand>
</feature>
<proteinExistence type="inferred from homology"/>
<reference key="1">
    <citation type="journal article" date="2001" name="Nature">
        <title>Genome sequence of Yersinia pestis, the causative agent of plague.</title>
        <authorList>
            <person name="Parkhill J."/>
            <person name="Wren B.W."/>
            <person name="Thomson N.R."/>
            <person name="Titball R.W."/>
            <person name="Holden M.T.G."/>
            <person name="Prentice M.B."/>
            <person name="Sebaihia M."/>
            <person name="James K.D."/>
            <person name="Churcher C.M."/>
            <person name="Mungall K.L."/>
            <person name="Baker S."/>
            <person name="Basham D."/>
            <person name="Bentley S.D."/>
            <person name="Brooks K."/>
            <person name="Cerdeno-Tarraga A.-M."/>
            <person name="Chillingworth T."/>
            <person name="Cronin A."/>
            <person name="Davies R.M."/>
            <person name="Davis P."/>
            <person name="Dougan G."/>
            <person name="Feltwell T."/>
            <person name="Hamlin N."/>
            <person name="Holroyd S."/>
            <person name="Jagels K."/>
            <person name="Karlyshev A.V."/>
            <person name="Leather S."/>
            <person name="Moule S."/>
            <person name="Oyston P.C.F."/>
            <person name="Quail M.A."/>
            <person name="Rutherford K.M."/>
            <person name="Simmonds M."/>
            <person name="Skelton J."/>
            <person name="Stevens K."/>
            <person name="Whitehead S."/>
            <person name="Barrell B.G."/>
        </authorList>
    </citation>
    <scope>NUCLEOTIDE SEQUENCE [LARGE SCALE GENOMIC DNA]</scope>
    <source>
        <strain>CO-92 / Biovar Orientalis</strain>
    </source>
</reference>
<reference key="2">
    <citation type="journal article" date="2002" name="J. Bacteriol.">
        <title>Genome sequence of Yersinia pestis KIM.</title>
        <authorList>
            <person name="Deng W."/>
            <person name="Burland V."/>
            <person name="Plunkett G. III"/>
            <person name="Boutin A."/>
            <person name="Mayhew G.F."/>
            <person name="Liss P."/>
            <person name="Perna N.T."/>
            <person name="Rose D.J."/>
            <person name="Mau B."/>
            <person name="Zhou S."/>
            <person name="Schwartz D.C."/>
            <person name="Fetherston J.D."/>
            <person name="Lindler L.E."/>
            <person name="Brubaker R.R."/>
            <person name="Plano G.V."/>
            <person name="Straley S.C."/>
            <person name="McDonough K.A."/>
            <person name="Nilles M.L."/>
            <person name="Matson J.S."/>
            <person name="Blattner F.R."/>
            <person name="Perry R.D."/>
        </authorList>
    </citation>
    <scope>NUCLEOTIDE SEQUENCE [LARGE SCALE GENOMIC DNA]</scope>
    <source>
        <strain>KIM10+ / Biovar Mediaevalis</strain>
    </source>
</reference>
<reference key="3">
    <citation type="journal article" date="2004" name="DNA Res.">
        <title>Complete genome sequence of Yersinia pestis strain 91001, an isolate avirulent to humans.</title>
        <authorList>
            <person name="Song Y."/>
            <person name="Tong Z."/>
            <person name="Wang J."/>
            <person name="Wang L."/>
            <person name="Guo Z."/>
            <person name="Han Y."/>
            <person name="Zhang J."/>
            <person name="Pei D."/>
            <person name="Zhou D."/>
            <person name="Qin H."/>
            <person name="Pang X."/>
            <person name="Han Y."/>
            <person name="Zhai J."/>
            <person name="Li M."/>
            <person name="Cui B."/>
            <person name="Qi Z."/>
            <person name="Jin L."/>
            <person name="Dai R."/>
            <person name="Chen F."/>
            <person name="Li S."/>
            <person name="Ye C."/>
            <person name="Du Z."/>
            <person name="Lin W."/>
            <person name="Wang J."/>
            <person name="Yu J."/>
            <person name="Yang H."/>
            <person name="Wang J."/>
            <person name="Huang P."/>
            <person name="Yang R."/>
        </authorList>
    </citation>
    <scope>NUCLEOTIDE SEQUENCE [LARGE SCALE GENOMIC DNA]</scope>
    <source>
        <strain>91001 / Biovar Mediaevalis</strain>
    </source>
</reference>
<comment type="function">
    <text evidence="1">Responsible for synthesis of pseudouridine from uracil-55 in the psi GC loop of transfer RNAs.</text>
</comment>
<comment type="catalytic activity">
    <reaction evidence="1">
        <text>uridine(55) in tRNA = pseudouridine(55) in tRNA</text>
        <dbReference type="Rhea" id="RHEA:42532"/>
        <dbReference type="Rhea" id="RHEA-COMP:10101"/>
        <dbReference type="Rhea" id="RHEA-COMP:10102"/>
        <dbReference type="ChEBI" id="CHEBI:65314"/>
        <dbReference type="ChEBI" id="CHEBI:65315"/>
        <dbReference type="EC" id="5.4.99.25"/>
    </reaction>
</comment>
<comment type="similarity">
    <text evidence="1">Belongs to the pseudouridine synthase TruB family. Type 1 subfamily.</text>
</comment>
<keyword id="KW-0413">Isomerase</keyword>
<keyword id="KW-1185">Reference proteome</keyword>
<keyword id="KW-0819">tRNA processing</keyword>
<name>TRUB_YERPE</name>
<gene>
    <name evidence="1" type="primary">truB</name>
    <name type="ordered locus">YPO3494</name>
    <name type="ordered locus">y0690</name>
    <name type="ordered locus">YP_0589</name>
</gene>